<gene>
    <name evidence="7" type="primary">LSU2</name>
    <name evidence="6" type="synonym">END6</name>
    <name evidence="8" type="ordered locus">At5g24660</name>
    <name evidence="9" type="ORF">MXC17.2</name>
</gene>
<feature type="chain" id="PRO_0000437693" description="Protein RESPONSE TO LOW SULFUR 2">
    <location>
        <begin position="1"/>
        <end position="94"/>
    </location>
</feature>
<feature type="coiled-coil region" evidence="1">
    <location>
        <begin position="15"/>
        <end position="63"/>
    </location>
</feature>
<sequence length="94" mass="10679">MGKGGNYVTVAASEVDELRRKNGEMEKAVEEMKKEMLQLWRRTQVAEEAEERLCSQLAELEAESLDQARDYHSRIIFLMNELSRLSSDSASASP</sequence>
<accession>Q9FIR9</accession>
<reference key="1">
    <citation type="journal article" date="1998" name="DNA Res.">
        <title>Structural analysis of Arabidopsis thaliana chromosome 5. VIII. Sequence features of the regions of 1,081,958 bp covered by seventeen physically assigned P1 and TAC clones.</title>
        <authorList>
            <person name="Asamizu E."/>
            <person name="Sato S."/>
            <person name="Kaneko T."/>
            <person name="Nakamura Y."/>
            <person name="Kotani H."/>
            <person name="Miyajima N."/>
            <person name="Tabata S."/>
        </authorList>
    </citation>
    <scope>NUCLEOTIDE SEQUENCE [LARGE SCALE GENOMIC DNA]</scope>
    <source>
        <strain>cv. Columbia</strain>
    </source>
</reference>
<reference key="2">
    <citation type="journal article" date="2017" name="Plant J.">
        <title>Araport11: a complete reannotation of the Arabidopsis thaliana reference genome.</title>
        <authorList>
            <person name="Cheng C.Y."/>
            <person name="Krishnakumar V."/>
            <person name="Chan A.P."/>
            <person name="Thibaud-Nissen F."/>
            <person name="Schobel S."/>
            <person name="Town C.D."/>
        </authorList>
    </citation>
    <scope>GENOME REANNOTATION</scope>
    <source>
        <strain>cv. Columbia</strain>
    </source>
</reference>
<reference key="3">
    <citation type="journal article" date="2002" name="Science">
        <title>Functional annotation of a full-length Arabidopsis cDNA collection.</title>
        <authorList>
            <person name="Seki M."/>
            <person name="Narusaka M."/>
            <person name="Kamiya A."/>
            <person name="Ishida J."/>
            <person name="Satou M."/>
            <person name="Sakurai T."/>
            <person name="Nakajima M."/>
            <person name="Enju A."/>
            <person name="Akiyama K."/>
            <person name="Oono Y."/>
            <person name="Muramatsu M."/>
            <person name="Hayashizaki Y."/>
            <person name="Kawai J."/>
            <person name="Carninci P."/>
            <person name="Itoh M."/>
            <person name="Ishii Y."/>
            <person name="Arakawa T."/>
            <person name="Shibata K."/>
            <person name="Shinagawa A."/>
            <person name="Shinozaki K."/>
        </authorList>
    </citation>
    <scope>NUCLEOTIDE SEQUENCE [LARGE SCALE MRNA]</scope>
    <source>
        <strain>cv. Columbia</strain>
    </source>
</reference>
<reference key="4">
    <citation type="journal article" date="2003" name="Science">
        <title>Empirical analysis of transcriptional activity in the Arabidopsis genome.</title>
        <authorList>
            <person name="Yamada K."/>
            <person name="Lim J."/>
            <person name="Dale J.M."/>
            <person name="Chen H."/>
            <person name="Shinn P."/>
            <person name="Palm C.J."/>
            <person name="Southwick A.M."/>
            <person name="Wu H.C."/>
            <person name="Kim C.J."/>
            <person name="Nguyen M."/>
            <person name="Pham P.K."/>
            <person name="Cheuk R.F."/>
            <person name="Karlin-Newmann G."/>
            <person name="Liu S.X."/>
            <person name="Lam B."/>
            <person name="Sakano H."/>
            <person name="Wu T."/>
            <person name="Yu G."/>
            <person name="Miranda M."/>
            <person name="Quach H.L."/>
            <person name="Tripp M."/>
            <person name="Chang C.H."/>
            <person name="Lee J.M."/>
            <person name="Toriumi M.J."/>
            <person name="Chan M.M."/>
            <person name="Tang C.C."/>
            <person name="Onodera C.S."/>
            <person name="Deng J.M."/>
            <person name="Akiyama K."/>
            <person name="Ansari Y."/>
            <person name="Arakawa T."/>
            <person name="Banh J."/>
            <person name="Banno F."/>
            <person name="Bowser L."/>
            <person name="Brooks S.Y."/>
            <person name="Carninci P."/>
            <person name="Chao Q."/>
            <person name="Choy N."/>
            <person name="Enju A."/>
            <person name="Goldsmith A.D."/>
            <person name="Gurjal M."/>
            <person name="Hansen N.F."/>
            <person name="Hayashizaki Y."/>
            <person name="Johnson-Hopson C."/>
            <person name="Hsuan V.W."/>
            <person name="Iida K."/>
            <person name="Karnes M."/>
            <person name="Khan S."/>
            <person name="Koesema E."/>
            <person name="Ishida J."/>
            <person name="Jiang P.X."/>
            <person name="Jones T."/>
            <person name="Kawai J."/>
            <person name="Kamiya A."/>
            <person name="Meyers C."/>
            <person name="Nakajima M."/>
            <person name="Narusaka M."/>
            <person name="Seki M."/>
            <person name="Sakurai T."/>
            <person name="Satou M."/>
            <person name="Tamse R."/>
            <person name="Vaysberg M."/>
            <person name="Wallender E.K."/>
            <person name="Wong C."/>
            <person name="Yamamura Y."/>
            <person name="Yuan S."/>
            <person name="Shinozaki K."/>
            <person name="Davis R.W."/>
            <person name="Theologis A."/>
            <person name="Ecker J.R."/>
        </authorList>
    </citation>
    <scope>NUCLEOTIDE SEQUENCE [LARGE SCALE MRNA]</scope>
    <source>
        <strain>cv. Columbia</strain>
    </source>
</reference>
<reference key="5">
    <citation type="submission" date="2002-03" db="EMBL/GenBank/DDBJ databases">
        <title>Full-length cDNA from Arabidopsis thaliana.</title>
        <authorList>
            <person name="Brover V.V."/>
            <person name="Troukhan M.E."/>
            <person name="Alexandrov N.A."/>
            <person name="Lu Y.-P."/>
            <person name="Flavell R.B."/>
            <person name="Feldmann K.A."/>
        </authorList>
    </citation>
    <scope>NUCLEOTIDE SEQUENCE [LARGE SCALE MRNA]</scope>
</reference>
<reference key="6">
    <citation type="journal article" date="2005" name="Plant J.">
        <title>Identification of a novel cis-acting element conferring sulfur deficiency response in Arabidopsis roots.</title>
        <authorList>
            <person name="Maruyama-Nakashita A."/>
            <person name="Nakamura Y."/>
            <person name="Watanabe-Takahashi A."/>
            <person name="Inoue E."/>
            <person name="Yamaya T."/>
            <person name="Takahashi H."/>
        </authorList>
    </citation>
    <scope>INDUCTION BY SULFUR DEFICIENCY</scope>
</reference>
<reference key="7">
    <citation type="journal article" date="2011" name="Science">
        <title>Independently evolved virulence effectors converge onto hubs in a plant immune system network.</title>
        <authorList>
            <consortium name="European Union Effectoromics Consortium"/>
            <person name="Mukhtar M.S."/>
            <person name="Carvunis A.-R."/>
            <person name="Dreze M."/>
            <person name="Epple P."/>
            <person name="Steinbrenner J."/>
            <person name="Moore J."/>
            <person name="Tasan M."/>
            <person name="Galli M."/>
            <person name="Hao T."/>
            <person name="Nishimura M.T."/>
            <person name="Pevzner S.J."/>
            <person name="Donovan S.E."/>
            <person name="Ghamsari L."/>
            <person name="Santhanam B."/>
            <person name="Romero V."/>
            <person name="Poulin M.M."/>
            <person name="Gebreab F."/>
            <person name="Gutierrez B.J."/>
            <person name="Tam S."/>
            <person name="Monachello D."/>
            <person name="Boxem M."/>
            <person name="Harbort C.J."/>
            <person name="McDonald N."/>
            <person name="Gai L."/>
            <person name="Chen H."/>
            <person name="He Y."/>
            <person name="Vandenhaute J."/>
            <person name="Roth F.P."/>
            <person name="Hill D.E."/>
            <person name="Ecker J.R."/>
            <person name="Vidal M."/>
            <person name="Beynon J."/>
            <person name="Braun P."/>
            <person name="Dangl J.L."/>
        </authorList>
    </citation>
    <scope>FUNCTION</scope>
    <scope>DISRUPTION PHENOTYPE</scope>
    <source>
        <strain>cv. Columbia</strain>
    </source>
</reference>
<reference key="8">
    <citation type="journal article" date="2012" name="Plant Physiol.">
        <title>Plastids are major regulators of light signaling in Arabidopsis.</title>
        <authorList>
            <person name="Ruckle M.E."/>
            <person name="Burgoon L.D."/>
            <person name="Lawrence L.A."/>
            <person name="Sinkler C.A."/>
            <person name="Larkin R.M."/>
        </authorList>
    </citation>
    <scope>INDUCTION BY LIGHT AND PLASTID SIGNALING</scope>
</reference>
<reference key="9">
    <citation type="journal article" date="2013" name="Physiol. Plantarum">
        <title>Linking genes of unknown function with abiotic stress responses by high-throughput phenotype screening.</title>
        <authorList>
            <person name="Luhua S."/>
            <person name="Hegie A."/>
            <person name="Suzuki N."/>
            <person name="Shulaev E."/>
            <person name="Luo X."/>
            <person name="Cenariu D."/>
            <person name="Ma V."/>
            <person name="Kao S."/>
            <person name="Lim J."/>
            <person name="Gunay M.B."/>
            <person name="Oosumi T."/>
            <person name="Lee S.C."/>
            <person name="Harper J."/>
            <person name="Cushman J."/>
            <person name="Gollery M."/>
            <person name="Girke T."/>
            <person name="Bailey-Serres J."/>
            <person name="Stevenson R.A."/>
            <person name="Zhu J.-K."/>
            <person name="Mittler R."/>
        </authorList>
    </citation>
    <scope>FUNCTION</scope>
    <scope>DISRUPTION PHENOTYPE</scope>
</reference>
<reference key="10">
    <citation type="journal article" date="2014" name="Front. Plant Sci.">
        <title>The family of LSU-like proteins.</title>
        <authorList>
            <person name="Sirko A."/>
            <person name="Wawrzynska A."/>
            <person name="Rodriguez M.C."/>
            <person name="Sektas P."/>
        </authorList>
    </citation>
    <scope>INDUCTION BY STRESSFUL ENVIRONMENTAL CONDITIONS</scope>
    <scope>REVIEW</scope>
    <scope>GENE FAMILY</scope>
    <scope>NOMENCLATURE</scope>
</reference>
<protein>
    <recommendedName>
        <fullName evidence="7">Protein RESPONSE TO LOW SULFUR 2</fullName>
    </recommendedName>
    <alternativeName>
        <fullName evidence="6">Protein ENHANCED DE-ETIOLATION 6</fullName>
    </alternativeName>
</protein>
<evidence type="ECO:0000255" key="1"/>
<evidence type="ECO:0000269" key="2">
    <source>
    </source>
</evidence>
<evidence type="ECO:0000269" key="3">
    <source>
    </source>
</evidence>
<evidence type="ECO:0000269" key="4">
    <source>
    </source>
</evidence>
<evidence type="ECO:0000269" key="5">
    <source>
    </source>
</evidence>
<evidence type="ECO:0000303" key="6">
    <source>
    </source>
</evidence>
<evidence type="ECO:0000303" key="7">
    <source>
    </source>
</evidence>
<evidence type="ECO:0000312" key="8">
    <source>
        <dbReference type="Araport" id="AT5G24660"/>
    </source>
</evidence>
<evidence type="ECO:0000312" key="9">
    <source>
        <dbReference type="EMBL" id="BAB09648.1"/>
    </source>
</evidence>
<dbReference type="EMBL" id="AB016881">
    <property type="protein sequence ID" value="BAB09648.1"/>
    <property type="molecule type" value="Genomic_DNA"/>
</dbReference>
<dbReference type="EMBL" id="CP002688">
    <property type="protein sequence ID" value="AED93346.1"/>
    <property type="molecule type" value="Genomic_DNA"/>
</dbReference>
<dbReference type="EMBL" id="AK118602">
    <property type="protein sequence ID" value="BAC43201.1"/>
    <property type="molecule type" value="mRNA"/>
</dbReference>
<dbReference type="EMBL" id="BT004681">
    <property type="protein sequence ID" value="AAO42927.1"/>
    <property type="molecule type" value="mRNA"/>
</dbReference>
<dbReference type="EMBL" id="AY086698">
    <property type="protein sequence ID" value="AAM63752.1"/>
    <property type="molecule type" value="mRNA"/>
</dbReference>
<dbReference type="RefSeq" id="NP_197854.1">
    <property type="nucleotide sequence ID" value="NM_122375.3"/>
</dbReference>
<dbReference type="SMR" id="Q9FIR9"/>
<dbReference type="FunCoup" id="Q9FIR9">
    <property type="interactions" value="21"/>
</dbReference>
<dbReference type="IntAct" id="Q9FIR9">
    <property type="interactions" value="44"/>
</dbReference>
<dbReference type="STRING" id="3702.Q9FIR9"/>
<dbReference type="GlyGen" id="Q9FIR9">
    <property type="glycosylation" value="1 site"/>
</dbReference>
<dbReference type="PaxDb" id="3702-AT5G24660.1"/>
<dbReference type="EnsemblPlants" id="AT5G24660.1">
    <property type="protein sequence ID" value="AT5G24660.1"/>
    <property type="gene ID" value="AT5G24660"/>
</dbReference>
<dbReference type="GeneID" id="832538"/>
<dbReference type="Gramene" id="AT5G24660.1">
    <property type="protein sequence ID" value="AT5G24660.1"/>
    <property type="gene ID" value="AT5G24660"/>
</dbReference>
<dbReference type="KEGG" id="ath:AT5G24660"/>
<dbReference type="Araport" id="AT5G24660"/>
<dbReference type="TAIR" id="AT5G24660">
    <property type="gene designation" value="LSU2"/>
</dbReference>
<dbReference type="eggNOG" id="ENOG502SZ0Q">
    <property type="taxonomic scope" value="Eukaryota"/>
</dbReference>
<dbReference type="HOGENOM" id="CLU_152833_0_0_1"/>
<dbReference type="InParanoid" id="Q9FIR9"/>
<dbReference type="OMA" id="RIIFLMN"/>
<dbReference type="OrthoDB" id="1888446at2759"/>
<dbReference type="PhylomeDB" id="Q9FIR9"/>
<dbReference type="PRO" id="PR:Q9FIR9"/>
<dbReference type="Proteomes" id="UP000006548">
    <property type="component" value="Chromosome 5"/>
</dbReference>
<dbReference type="ExpressionAtlas" id="Q9FIR9">
    <property type="expression patterns" value="baseline and differential"/>
</dbReference>
<dbReference type="GO" id="GO:0098869">
    <property type="term" value="P:cellular oxidant detoxification"/>
    <property type="evidence" value="ECO:0007669"/>
    <property type="project" value="InterPro"/>
</dbReference>
<dbReference type="GO" id="GO:0010438">
    <property type="term" value="P:cellular response to sulfur starvation"/>
    <property type="evidence" value="ECO:0000270"/>
    <property type="project" value="UniProtKB"/>
</dbReference>
<dbReference type="GO" id="GO:0009658">
    <property type="term" value="P:chloroplast organization"/>
    <property type="evidence" value="ECO:0000315"/>
    <property type="project" value="TAIR"/>
</dbReference>
<dbReference type="GO" id="GO:0042742">
    <property type="term" value="P:defense response to bacterium"/>
    <property type="evidence" value="ECO:0000315"/>
    <property type="project" value="UniProtKB"/>
</dbReference>
<dbReference type="GO" id="GO:0002229">
    <property type="term" value="P:defense response to oomycetes"/>
    <property type="evidence" value="ECO:0000315"/>
    <property type="project" value="UniProtKB"/>
</dbReference>
<dbReference type="GO" id="GO:0045893">
    <property type="term" value="P:positive regulation of DNA-templated transcription"/>
    <property type="evidence" value="ECO:0000315"/>
    <property type="project" value="TAIR"/>
</dbReference>
<dbReference type="GO" id="GO:0031347">
    <property type="term" value="P:regulation of defense response"/>
    <property type="evidence" value="ECO:0000315"/>
    <property type="project" value="TAIR"/>
</dbReference>
<dbReference type="GO" id="GO:0047484">
    <property type="term" value="P:regulation of response to osmotic stress"/>
    <property type="evidence" value="ECO:0000315"/>
    <property type="project" value="UniProtKB"/>
</dbReference>
<dbReference type="GO" id="GO:0009651">
    <property type="term" value="P:response to salt stress"/>
    <property type="evidence" value="ECO:0000270"/>
    <property type="project" value="UniProtKB"/>
</dbReference>
<dbReference type="InterPro" id="IPR039282">
    <property type="entry name" value="LSU"/>
</dbReference>
<dbReference type="PANTHER" id="PTHR34283">
    <property type="entry name" value="PROTEIN RESPONSE TO LOW SULFUR 1"/>
    <property type="match status" value="1"/>
</dbReference>
<dbReference type="PANTHER" id="PTHR34283:SF5">
    <property type="entry name" value="PROTEIN RESPONSE TO LOW SULFUR 2-RELATED"/>
    <property type="match status" value="1"/>
</dbReference>
<dbReference type="Pfam" id="PF24980">
    <property type="entry name" value="LSU"/>
    <property type="match status" value="1"/>
</dbReference>
<name>LSU2_ARATH</name>
<proteinExistence type="evidence at protein level"/>
<keyword id="KW-0175">Coiled coil</keyword>
<keyword id="KW-0611">Plant defense</keyword>
<keyword id="KW-1185">Reference proteome</keyword>
<comment type="function">
    <text evidence="3 5">May be involved in defense responses monitoring (PubMed:21798943). Probably implicated into osmotic stress signaling (PubMed:23517122).</text>
</comment>
<comment type="interaction">
    <interactant intactId="EBI-4424076">
        <id>Q9FIR9</id>
    </interactant>
    <interactant intactId="EBI-4446727">
        <id>Q94ID6</id>
        <label>ERF12</label>
    </interactant>
    <organismsDiffer>false</organismsDiffer>
    <experiments>4</experiments>
</comment>
<comment type="interaction">
    <interactant intactId="EBI-4424076">
        <id>Q9FIR9</id>
    </interactant>
    <interactant intactId="EBI-1536925">
        <id>Q9FYK5</id>
        <label>ESR2</label>
    </interactant>
    <organismsDiffer>false</organismsDiffer>
    <experiments>3</experiments>
</comment>
<comment type="interaction">
    <interactant intactId="EBI-4424076">
        <id>Q9FIR9</id>
    </interactant>
    <interactant intactId="EBI-4426127">
        <id>Q8GXL7</id>
        <label>GATA24</label>
    </interactant>
    <organismsDiffer>false</organismsDiffer>
    <experiments>3</experiments>
</comment>
<comment type="interaction">
    <interactant intactId="EBI-4424076">
        <id>Q9FIR9</id>
    </interactant>
    <interactant intactId="EBI-2012188">
        <id>Q8RXD6</id>
        <label>HUB1</label>
    </interactant>
    <organismsDiffer>false</organismsDiffer>
    <experiments>3</experiments>
</comment>
<comment type="interaction">
    <interactant intactId="EBI-4424076">
        <id>Q9FIR9</id>
    </interactant>
    <interactant intactId="EBI-1392093">
        <id>Q5ICL9</id>
        <label>NPR4</label>
    </interactant>
    <organismsDiffer>false</organismsDiffer>
    <experiments>3</experiments>
</comment>
<comment type="interaction">
    <interactant intactId="EBI-4424076">
        <id>Q9FIR9</id>
    </interactant>
    <interactant intactId="EBI-4426557">
        <id>Q84MB2</id>
        <label>TIFY8</label>
    </interactant>
    <organismsDiffer>false</organismsDiffer>
    <experiments>3</experiments>
</comment>
<comment type="interaction">
    <interactant intactId="EBI-4424076">
        <id>Q9FIR9</id>
    </interactant>
    <interactant intactId="EBI-15193683">
        <id>Q5CCK4</id>
        <label>VAL2</label>
    </interactant>
    <organismsDiffer>false</organismsDiffer>
    <experiments>3</experiments>
</comment>
<comment type="induction">
    <text evidence="2 4 7">By stressful environmental conditions such as salt stress, AgNO(3), and sulfur deficiency (PubMed:15842617, PubMed:25628631). Induced during oxidative stress (PubMed:25628631). Accumulates at the beginning of an extended night, which may indicate that it is induced by carbon starvation and in response to sugar (PubMed:25628631). Induced by a combination of light and plastid signaling (PubMed:22383539).</text>
</comment>
<comment type="disruption phenotype">
    <text evidence="3 5">Enhanced tolerance to osmotic stress (PubMed:23517122). Increased susceptibility to pathogens such as P.syringae and H.arabidopsidis (PubMed:21798943).</text>
</comment>
<organism>
    <name type="scientific">Arabidopsis thaliana</name>
    <name type="common">Mouse-ear cress</name>
    <dbReference type="NCBI Taxonomy" id="3702"/>
    <lineage>
        <taxon>Eukaryota</taxon>
        <taxon>Viridiplantae</taxon>
        <taxon>Streptophyta</taxon>
        <taxon>Embryophyta</taxon>
        <taxon>Tracheophyta</taxon>
        <taxon>Spermatophyta</taxon>
        <taxon>Magnoliopsida</taxon>
        <taxon>eudicotyledons</taxon>
        <taxon>Gunneridae</taxon>
        <taxon>Pentapetalae</taxon>
        <taxon>rosids</taxon>
        <taxon>malvids</taxon>
        <taxon>Brassicales</taxon>
        <taxon>Brassicaceae</taxon>
        <taxon>Camelineae</taxon>
        <taxon>Arabidopsis</taxon>
    </lineage>
</organism>